<accession>C5C2I9</accession>
<gene>
    <name evidence="1" type="primary">leuB</name>
    <name type="ordered locus">Bcav_1417</name>
</gene>
<organism>
    <name type="scientific">Beutenbergia cavernae (strain ATCC BAA-8 / DSM 12333 / CCUG 43141 / JCM 11478 / NBRC 16432 / NCIMB 13614 / HKI 0122)</name>
    <dbReference type="NCBI Taxonomy" id="471853"/>
    <lineage>
        <taxon>Bacteria</taxon>
        <taxon>Bacillati</taxon>
        <taxon>Actinomycetota</taxon>
        <taxon>Actinomycetes</taxon>
        <taxon>Micrococcales</taxon>
        <taxon>Beutenbergiaceae</taxon>
        <taxon>Beutenbergia</taxon>
    </lineage>
</organism>
<dbReference type="EC" id="1.1.1.85" evidence="1"/>
<dbReference type="EMBL" id="CP001618">
    <property type="protein sequence ID" value="ACQ79675.1"/>
    <property type="molecule type" value="Genomic_DNA"/>
</dbReference>
<dbReference type="RefSeq" id="WP_015881915.1">
    <property type="nucleotide sequence ID" value="NC_012669.1"/>
</dbReference>
<dbReference type="SMR" id="C5C2I9"/>
<dbReference type="STRING" id="471853.Bcav_1417"/>
<dbReference type="KEGG" id="bcv:Bcav_1417"/>
<dbReference type="eggNOG" id="COG0473">
    <property type="taxonomic scope" value="Bacteria"/>
</dbReference>
<dbReference type="HOGENOM" id="CLU_031953_0_1_11"/>
<dbReference type="OrthoDB" id="5289857at2"/>
<dbReference type="UniPathway" id="UPA00048">
    <property type="reaction ID" value="UER00072"/>
</dbReference>
<dbReference type="Proteomes" id="UP000007962">
    <property type="component" value="Chromosome"/>
</dbReference>
<dbReference type="GO" id="GO:0005737">
    <property type="term" value="C:cytoplasm"/>
    <property type="evidence" value="ECO:0007669"/>
    <property type="project" value="UniProtKB-SubCell"/>
</dbReference>
<dbReference type="GO" id="GO:0003862">
    <property type="term" value="F:3-isopropylmalate dehydrogenase activity"/>
    <property type="evidence" value="ECO:0007669"/>
    <property type="project" value="UniProtKB-UniRule"/>
</dbReference>
<dbReference type="GO" id="GO:0000287">
    <property type="term" value="F:magnesium ion binding"/>
    <property type="evidence" value="ECO:0007669"/>
    <property type="project" value="InterPro"/>
</dbReference>
<dbReference type="GO" id="GO:0051287">
    <property type="term" value="F:NAD binding"/>
    <property type="evidence" value="ECO:0007669"/>
    <property type="project" value="InterPro"/>
</dbReference>
<dbReference type="GO" id="GO:0009098">
    <property type="term" value="P:L-leucine biosynthetic process"/>
    <property type="evidence" value="ECO:0007669"/>
    <property type="project" value="UniProtKB-UniRule"/>
</dbReference>
<dbReference type="Gene3D" id="3.40.718.10">
    <property type="entry name" value="Isopropylmalate Dehydrogenase"/>
    <property type="match status" value="1"/>
</dbReference>
<dbReference type="HAMAP" id="MF_01035">
    <property type="entry name" value="LeuB_type2"/>
    <property type="match status" value="1"/>
</dbReference>
<dbReference type="InterPro" id="IPR050501">
    <property type="entry name" value="ICDH/IPMDH"/>
</dbReference>
<dbReference type="InterPro" id="IPR019818">
    <property type="entry name" value="IsoCit/isopropylmalate_DH_CS"/>
</dbReference>
<dbReference type="InterPro" id="IPR024084">
    <property type="entry name" value="IsoPropMal-DH-like_dom"/>
</dbReference>
<dbReference type="InterPro" id="IPR023698">
    <property type="entry name" value="LeuB_actb"/>
</dbReference>
<dbReference type="NCBIfam" id="NF002898">
    <property type="entry name" value="PRK03437.1"/>
    <property type="match status" value="1"/>
</dbReference>
<dbReference type="PANTHER" id="PTHR43275">
    <property type="entry name" value="D-MALATE DEHYDROGENASE [DECARBOXYLATING]"/>
    <property type="match status" value="1"/>
</dbReference>
<dbReference type="PANTHER" id="PTHR43275:SF1">
    <property type="entry name" value="D-MALATE DEHYDROGENASE [DECARBOXYLATING]"/>
    <property type="match status" value="1"/>
</dbReference>
<dbReference type="Pfam" id="PF00180">
    <property type="entry name" value="Iso_dh"/>
    <property type="match status" value="1"/>
</dbReference>
<dbReference type="SMART" id="SM01329">
    <property type="entry name" value="Iso_dh"/>
    <property type="match status" value="1"/>
</dbReference>
<dbReference type="SUPFAM" id="SSF53659">
    <property type="entry name" value="Isocitrate/Isopropylmalate dehydrogenase-like"/>
    <property type="match status" value="1"/>
</dbReference>
<dbReference type="PROSITE" id="PS00470">
    <property type="entry name" value="IDH_IMDH"/>
    <property type="match status" value="1"/>
</dbReference>
<reference key="1">
    <citation type="journal article" date="2009" name="Stand. Genomic Sci.">
        <title>Complete genome sequence of Beutenbergia cavernae type strain (HKI 0122).</title>
        <authorList>
            <person name="Land M."/>
            <person name="Pukall R."/>
            <person name="Abt B."/>
            <person name="Goker M."/>
            <person name="Rohde M."/>
            <person name="Glavina Del Rio T."/>
            <person name="Tice H."/>
            <person name="Copeland A."/>
            <person name="Cheng J.F."/>
            <person name="Lucas S."/>
            <person name="Chen F."/>
            <person name="Nolan M."/>
            <person name="Bruce D."/>
            <person name="Goodwin L."/>
            <person name="Pitluck S."/>
            <person name="Ivanova N."/>
            <person name="Mavromatis K."/>
            <person name="Ovchinnikova G."/>
            <person name="Pati A."/>
            <person name="Chen A."/>
            <person name="Palaniappan K."/>
            <person name="Hauser L."/>
            <person name="Chang Y.J."/>
            <person name="Jefferies C.C."/>
            <person name="Saunders E."/>
            <person name="Brettin T."/>
            <person name="Detter J.C."/>
            <person name="Han C."/>
            <person name="Chain P."/>
            <person name="Bristow J."/>
            <person name="Eisen J.A."/>
            <person name="Markowitz V."/>
            <person name="Hugenholtz P."/>
            <person name="Kyrpides N.C."/>
            <person name="Klenk H.P."/>
            <person name="Lapidus A."/>
        </authorList>
    </citation>
    <scope>NUCLEOTIDE SEQUENCE [LARGE SCALE GENOMIC DNA]</scope>
    <source>
        <strain>ATCC BAA-8 / DSM 12333 / CCUG 43141 / JCM 11478 / NBRC 16432 / NCIMB 13614 / HKI 0122</strain>
    </source>
</reference>
<proteinExistence type="inferred from homology"/>
<comment type="function">
    <text evidence="1">Catalyzes the oxidation of 3-carboxy-2-hydroxy-4-methylpentanoate (3-isopropylmalate) to 3-carboxy-4-methyl-2-oxopentanoate. The product decarboxylates to 4-methyl-2 oxopentanoate.</text>
</comment>
<comment type="catalytic activity">
    <reaction evidence="1">
        <text>(2R,3S)-3-isopropylmalate + NAD(+) = 4-methyl-2-oxopentanoate + CO2 + NADH</text>
        <dbReference type="Rhea" id="RHEA:32271"/>
        <dbReference type="ChEBI" id="CHEBI:16526"/>
        <dbReference type="ChEBI" id="CHEBI:17865"/>
        <dbReference type="ChEBI" id="CHEBI:35121"/>
        <dbReference type="ChEBI" id="CHEBI:57540"/>
        <dbReference type="ChEBI" id="CHEBI:57945"/>
        <dbReference type="EC" id="1.1.1.85"/>
    </reaction>
</comment>
<comment type="cofactor">
    <cofactor evidence="1">
        <name>Mg(2+)</name>
        <dbReference type="ChEBI" id="CHEBI:18420"/>
    </cofactor>
    <cofactor evidence="1">
        <name>Mn(2+)</name>
        <dbReference type="ChEBI" id="CHEBI:29035"/>
    </cofactor>
    <text evidence="1">Binds 1 Mg(2+) or Mn(2+) ion per subunit.</text>
</comment>
<comment type="pathway">
    <text evidence="1">Amino-acid biosynthesis; L-leucine biosynthesis; L-leucine from 3-methyl-2-oxobutanoate: step 3/4.</text>
</comment>
<comment type="subunit">
    <text evidence="1">Homodimer.</text>
</comment>
<comment type="subcellular location">
    <subcellularLocation>
        <location evidence="1">Cytoplasm</location>
    </subcellularLocation>
</comment>
<comment type="similarity">
    <text evidence="1">Belongs to the isocitrate and isopropylmalate dehydrogenases family. LeuB type 2 subfamily.</text>
</comment>
<sequence>MTRSIDLAVVAGDGIGPEVVAEGLKVLDAALAGTDVTVRTTAYDLGAARWHATGETLTDEDLAALAQHDAILLGAIGDPGVPSGVLERGLLLKLRFAFDHYVNLRPSRLYPGVATPLAKGGDVDFVVVREGTEGPYVGNGGAIRVGTPHEIANEVSVNTAFGVERVVRDAFARADARPRKKLTLVHKHNVLVHAGHLWRRTVEAVGAEFPDVAVDYLHVDAATIFLVTDPARFDVVVTDNLFGDILTDLAAAITGGIGLAASGNINPDRAFPSMFEPVHGSAPDIAGQGKADPTATVLSVALLLEHLGLTEQAARITAAVESDIVERGSAVRSTAEVGDALAARVAG</sequence>
<protein>
    <recommendedName>
        <fullName evidence="1">3-isopropylmalate dehydrogenase</fullName>
        <ecNumber evidence="1">1.1.1.85</ecNumber>
    </recommendedName>
    <alternativeName>
        <fullName evidence="1">3-IPM-DH</fullName>
    </alternativeName>
    <alternativeName>
        <fullName evidence="1">Beta-IPM dehydrogenase</fullName>
        <shortName evidence="1">IMDH</shortName>
    </alternativeName>
</protein>
<evidence type="ECO:0000255" key="1">
    <source>
        <dbReference type="HAMAP-Rule" id="MF_01035"/>
    </source>
</evidence>
<name>LEU3_BEUC1</name>
<keyword id="KW-0028">Amino-acid biosynthesis</keyword>
<keyword id="KW-0100">Branched-chain amino acid biosynthesis</keyword>
<keyword id="KW-0963">Cytoplasm</keyword>
<keyword id="KW-0432">Leucine biosynthesis</keyword>
<keyword id="KW-0460">Magnesium</keyword>
<keyword id="KW-0464">Manganese</keyword>
<keyword id="KW-0479">Metal-binding</keyword>
<keyword id="KW-0520">NAD</keyword>
<keyword id="KW-0560">Oxidoreductase</keyword>
<keyword id="KW-1185">Reference proteome</keyword>
<feature type="chain" id="PRO_1000213375" description="3-isopropylmalate dehydrogenase">
    <location>
        <begin position="1"/>
        <end position="347"/>
    </location>
</feature>
<feature type="binding site" evidence="1">
    <location>
        <position position="95"/>
    </location>
    <ligand>
        <name>substrate</name>
    </ligand>
</feature>
<feature type="binding site" evidence="1">
    <location>
        <position position="105"/>
    </location>
    <ligand>
        <name>substrate</name>
    </ligand>
</feature>
<feature type="binding site" evidence="1">
    <location>
        <position position="129"/>
    </location>
    <ligand>
        <name>substrate</name>
    </ligand>
</feature>
<feature type="binding site" evidence="1">
    <location>
        <position position="220"/>
    </location>
    <ligand>
        <name>Mg(2+)</name>
        <dbReference type="ChEBI" id="CHEBI:18420"/>
    </ligand>
</feature>
<feature type="binding site" evidence="1">
    <location>
        <position position="220"/>
    </location>
    <ligand>
        <name>substrate</name>
    </ligand>
</feature>
<feature type="binding site" evidence="1">
    <location>
        <position position="244"/>
    </location>
    <ligand>
        <name>Mg(2+)</name>
        <dbReference type="ChEBI" id="CHEBI:18420"/>
    </ligand>
</feature>
<feature type="binding site" evidence="1">
    <location>
        <position position="248"/>
    </location>
    <ligand>
        <name>Mg(2+)</name>
        <dbReference type="ChEBI" id="CHEBI:18420"/>
    </ligand>
</feature>
<feature type="binding site" evidence="1">
    <location>
        <begin position="280"/>
        <end position="292"/>
    </location>
    <ligand>
        <name>NAD(+)</name>
        <dbReference type="ChEBI" id="CHEBI:57540"/>
    </ligand>
</feature>
<feature type="site" description="Important for catalysis" evidence="1">
    <location>
        <position position="136"/>
    </location>
</feature>
<feature type="site" description="Important for catalysis" evidence="1">
    <location>
        <position position="187"/>
    </location>
</feature>